<reference key="1">
    <citation type="journal article" date="2007" name="Photosyn. Res.">
        <title>Complete nucleotide sequence of the freshwater unicellular cyanobacterium Synechococcus elongatus PCC 6301 chromosome: gene content and organization.</title>
        <authorList>
            <person name="Sugita C."/>
            <person name="Ogata K."/>
            <person name="Shikata M."/>
            <person name="Jikuya H."/>
            <person name="Takano J."/>
            <person name="Furumichi M."/>
            <person name="Kanehisa M."/>
            <person name="Omata T."/>
            <person name="Sugiura M."/>
            <person name="Sugita M."/>
        </authorList>
    </citation>
    <scope>NUCLEOTIDE SEQUENCE [LARGE SCALE GENOMIC DNA]</scope>
    <source>
        <strain>ATCC 27144 / PCC 6301 / SAUG 1402/1</strain>
    </source>
</reference>
<evidence type="ECO:0000255" key="1">
    <source>
        <dbReference type="HAMAP-Rule" id="MF_00303"/>
    </source>
</evidence>
<evidence type="ECO:0000256" key="2">
    <source>
        <dbReference type="SAM" id="MobiDB-lite"/>
    </source>
</evidence>
<dbReference type="EC" id="5.2.1.8" evidence="1"/>
<dbReference type="EMBL" id="AP008231">
    <property type="protein sequence ID" value="BAD79775.1"/>
    <property type="molecule type" value="Genomic_DNA"/>
</dbReference>
<dbReference type="RefSeq" id="WP_011243895.1">
    <property type="nucleotide sequence ID" value="NC_006576.1"/>
</dbReference>
<dbReference type="SMR" id="Q5N1P5"/>
<dbReference type="KEGG" id="syc:syc1585_c"/>
<dbReference type="eggNOG" id="COG0544">
    <property type="taxonomic scope" value="Bacteria"/>
</dbReference>
<dbReference type="Proteomes" id="UP000001175">
    <property type="component" value="Chromosome"/>
</dbReference>
<dbReference type="GO" id="GO:0005737">
    <property type="term" value="C:cytoplasm"/>
    <property type="evidence" value="ECO:0007669"/>
    <property type="project" value="UniProtKB-SubCell"/>
</dbReference>
<dbReference type="GO" id="GO:0003755">
    <property type="term" value="F:peptidyl-prolyl cis-trans isomerase activity"/>
    <property type="evidence" value="ECO:0007669"/>
    <property type="project" value="UniProtKB-UniRule"/>
</dbReference>
<dbReference type="GO" id="GO:0044183">
    <property type="term" value="F:protein folding chaperone"/>
    <property type="evidence" value="ECO:0007669"/>
    <property type="project" value="TreeGrafter"/>
</dbReference>
<dbReference type="GO" id="GO:0043022">
    <property type="term" value="F:ribosome binding"/>
    <property type="evidence" value="ECO:0007669"/>
    <property type="project" value="TreeGrafter"/>
</dbReference>
<dbReference type="GO" id="GO:0051083">
    <property type="term" value="P:'de novo' cotranslational protein folding"/>
    <property type="evidence" value="ECO:0007669"/>
    <property type="project" value="TreeGrafter"/>
</dbReference>
<dbReference type="GO" id="GO:0051301">
    <property type="term" value="P:cell division"/>
    <property type="evidence" value="ECO:0007669"/>
    <property type="project" value="UniProtKB-KW"/>
</dbReference>
<dbReference type="GO" id="GO:0061077">
    <property type="term" value="P:chaperone-mediated protein folding"/>
    <property type="evidence" value="ECO:0007669"/>
    <property type="project" value="TreeGrafter"/>
</dbReference>
<dbReference type="GO" id="GO:0015031">
    <property type="term" value="P:protein transport"/>
    <property type="evidence" value="ECO:0007669"/>
    <property type="project" value="UniProtKB-UniRule"/>
</dbReference>
<dbReference type="GO" id="GO:0043335">
    <property type="term" value="P:protein unfolding"/>
    <property type="evidence" value="ECO:0007669"/>
    <property type="project" value="TreeGrafter"/>
</dbReference>
<dbReference type="FunFam" id="3.10.50.40:FF:000001">
    <property type="entry name" value="Trigger factor"/>
    <property type="match status" value="1"/>
</dbReference>
<dbReference type="FunFam" id="3.30.70.1050:FF:000004">
    <property type="entry name" value="Trigger factor"/>
    <property type="match status" value="1"/>
</dbReference>
<dbReference type="Gene3D" id="3.10.50.40">
    <property type="match status" value="1"/>
</dbReference>
<dbReference type="Gene3D" id="3.30.70.1050">
    <property type="entry name" value="Trigger factor ribosome-binding domain"/>
    <property type="match status" value="1"/>
</dbReference>
<dbReference type="Gene3D" id="1.10.3120.10">
    <property type="entry name" value="Trigger factor, C-terminal domain"/>
    <property type="match status" value="1"/>
</dbReference>
<dbReference type="HAMAP" id="MF_00303">
    <property type="entry name" value="Trigger_factor_Tig"/>
    <property type="match status" value="1"/>
</dbReference>
<dbReference type="InterPro" id="IPR046357">
    <property type="entry name" value="PPIase_dom_sf"/>
</dbReference>
<dbReference type="InterPro" id="IPR001179">
    <property type="entry name" value="PPIase_FKBP_dom"/>
</dbReference>
<dbReference type="InterPro" id="IPR005215">
    <property type="entry name" value="Trig_fac"/>
</dbReference>
<dbReference type="InterPro" id="IPR008880">
    <property type="entry name" value="Trigger_fac_C"/>
</dbReference>
<dbReference type="InterPro" id="IPR037041">
    <property type="entry name" value="Trigger_fac_C_sf"/>
</dbReference>
<dbReference type="InterPro" id="IPR008881">
    <property type="entry name" value="Trigger_fac_ribosome-bd_bac"/>
</dbReference>
<dbReference type="InterPro" id="IPR036611">
    <property type="entry name" value="Trigger_fac_ribosome-bd_sf"/>
</dbReference>
<dbReference type="InterPro" id="IPR027304">
    <property type="entry name" value="Trigger_fact/SurA_dom_sf"/>
</dbReference>
<dbReference type="NCBIfam" id="TIGR00115">
    <property type="entry name" value="tig"/>
    <property type="match status" value="1"/>
</dbReference>
<dbReference type="PANTHER" id="PTHR30560">
    <property type="entry name" value="TRIGGER FACTOR CHAPERONE AND PEPTIDYL-PROLYL CIS/TRANS ISOMERASE"/>
    <property type="match status" value="1"/>
</dbReference>
<dbReference type="PANTHER" id="PTHR30560:SF3">
    <property type="entry name" value="TRIGGER FACTOR-LIKE PROTEIN TIG, CHLOROPLASTIC"/>
    <property type="match status" value="1"/>
</dbReference>
<dbReference type="Pfam" id="PF00254">
    <property type="entry name" value="FKBP_C"/>
    <property type="match status" value="1"/>
</dbReference>
<dbReference type="Pfam" id="PF05698">
    <property type="entry name" value="Trigger_C"/>
    <property type="match status" value="1"/>
</dbReference>
<dbReference type="Pfam" id="PF05697">
    <property type="entry name" value="Trigger_N"/>
    <property type="match status" value="1"/>
</dbReference>
<dbReference type="PIRSF" id="PIRSF003095">
    <property type="entry name" value="Trigger_factor"/>
    <property type="match status" value="1"/>
</dbReference>
<dbReference type="SUPFAM" id="SSF54534">
    <property type="entry name" value="FKBP-like"/>
    <property type="match status" value="1"/>
</dbReference>
<dbReference type="SUPFAM" id="SSF109998">
    <property type="entry name" value="Triger factor/SurA peptide-binding domain-like"/>
    <property type="match status" value="1"/>
</dbReference>
<dbReference type="SUPFAM" id="SSF102735">
    <property type="entry name" value="Trigger factor ribosome-binding domain"/>
    <property type="match status" value="1"/>
</dbReference>
<dbReference type="PROSITE" id="PS50059">
    <property type="entry name" value="FKBP_PPIASE"/>
    <property type="match status" value="1"/>
</dbReference>
<sequence>MSIKVTQEKLPASRVGLQIEVSGEQSRQVYERTLTRLSREVRFPGFRPGKVPRPVLIQRLGETALKANAIEDLVQQSLESAIAQESIPAIGNYQLSSDFETLVAAFQPGKSFSFEASVDVQPTATLAQYTGLTVEVAEVPFDANRVDNVLAEQQKQMATLVPVEGRNAAIGDVAVIDFQGILVESGEEIPGGSGTDFQIEVEEDRFIPGFISGIVGMAIEETRTVDATFPETYAQEEVAGKAAQFTITLKELKTRDLPELDDAFAQEASQYETIEELKTALTERFQAEHESEVKASKRDAILTALADQLDVEIPESLLQREISAMINETASRLSGQGMDVRKLFTEEVLERLRENSKDEDEQRLRRTIALGELAKVTETQVDDEAVKARAAELLSNYPRPQEVDRDRLITVVREELLEDKLLEWFEANNSVTFVAPKAAETEVDAASATVETTATETAEEAPEAPKAKKGKKKA</sequence>
<protein>
    <recommendedName>
        <fullName evidence="1">Trigger factor</fullName>
        <shortName evidence="1">TF</shortName>
        <ecNumber evidence="1">5.2.1.8</ecNumber>
    </recommendedName>
    <alternativeName>
        <fullName evidence="1">PPIase</fullName>
    </alternativeName>
</protein>
<gene>
    <name evidence="1" type="primary">tig</name>
    <name type="ordered locus">syc1585_c</name>
</gene>
<name>TIG_SYNP6</name>
<comment type="function">
    <text evidence="1">Involved in protein export. Acts as a chaperone by maintaining the newly synthesized protein in an open conformation. Functions as a peptidyl-prolyl cis-trans isomerase.</text>
</comment>
<comment type="catalytic activity">
    <reaction evidence="1">
        <text>[protein]-peptidylproline (omega=180) = [protein]-peptidylproline (omega=0)</text>
        <dbReference type="Rhea" id="RHEA:16237"/>
        <dbReference type="Rhea" id="RHEA-COMP:10747"/>
        <dbReference type="Rhea" id="RHEA-COMP:10748"/>
        <dbReference type="ChEBI" id="CHEBI:83833"/>
        <dbReference type="ChEBI" id="CHEBI:83834"/>
        <dbReference type="EC" id="5.2.1.8"/>
    </reaction>
</comment>
<comment type="subcellular location">
    <subcellularLocation>
        <location>Cytoplasm</location>
    </subcellularLocation>
    <text evidence="1">About half TF is bound to the ribosome near the polypeptide exit tunnel while the other half is free in the cytoplasm.</text>
</comment>
<comment type="domain">
    <text evidence="1">Consists of 3 domains; the N-terminus binds the ribosome, the middle domain has PPIase activity, while the C-terminus has intrinsic chaperone activity on its own.</text>
</comment>
<comment type="similarity">
    <text evidence="1">Belongs to the FKBP-type PPIase family. Tig subfamily.</text>
</comment>
<accession>Q5N1P5</accession>
<organism>
    <name type="scientific">Synechococcus sp. (strain ATCC 27144 / PCC 6301 / SAUG 1402/1)</name>
    <name type="common">Anacystis nidulans</name>
    <dbReference type="NCBI Taxonomy" id="269084"/>
    <lineage>
        <taxon>Bacteria</taxon>
        <taxon>Bacillati</taxon>
        <taxon>Cyanobacteriota</taxon>
        <taxon>Cyanophyceae</taxon>
        <taxon>Synechococcales</taxon>
        <taxon>Synechococcaceae</taxon>
        <taxon>Synechococcus</taxon>
    </lineage>
</organism>
<proteinExistence type="inferred from homology"/>
<keyword id="KW-0131">Cell cycle</keyword>
<keyword id="KW-0132">Cell division</keyword>
<keyword id="KW-0143">Chaperone</keyword>
<keyword id="KW-0963">Cytoplasm</keyword>
<keyword id="KW-0413">Isomerase</keyword>
<keyword id="KW-0697">Rotamase</keyword>
<feature type="chain" id="PRO_0000179448" description="Trigger factor">
    <location>
        <begin position="1"/>
        <end position="474"/>
    </location>
</feature>
<feature type="domain" description="PPIase FKBP-type" evidence="1">
    <location>
        <begin position="171"/>
        <end position="258"/>
    </location>
</feature>
<feature type="region of interest" description="Disordered" evidence="2">
    <location>
        <begin position="441"/>
        <end position="474"/>
    </location>
</feature>
<feature type="compositionally biased region" description="Low complexity" evidence="2">
    <location>
        <begin position="444"/>
        <end position="456"/>
    </location>
</feature>